<proteinExistence type="inferred from homology"/>
<feature type="chain" id="PRO_0000413303" description="Glutamyl-tRNA(Gln) amidotransferase subunit C, mitochondrial">
    <location>
        <begin position="1"/>
        <end position="148"/>
    </location>
</feature>
<name>GATC_DROME</name>
<sequence length="148" mass="16869">MLRLFSSRFYCKIATKSNEKATKLDFKQLTHPTKVPQTPVDSKFPDTSASEIQIDTKTIQLLERLSLVDLDSERALATLKSSIQFADKIAHINTEHVRPLYTVLEHQQLQLRNDQVTEGDCRAEVLRNAKVTDEDYFVSPPGNIPLEQ</sequence>
<dbReference type="EC" id="6.3.5.-" evidence="1"/>
<dbReference type="EMBL" id="AE014134">
    <property type="protein sequence ID" value="AAO41185.1"/>
    <property type="molecule type" value="Genomic_DNA"/>
</dbReference>
<dbReference type="RefSeq" id="NP_001027263.1">
    <property type="nucleotide sequence ID" value="NM_001032092.3"/>
</dbReference>
<dbReference type="SMR" id="Q86BL4"/>
<dbReference type="FunCoup" id="Q86BL4">
    <property type="interactions" value="1125"/>
</dbReference>
<dbReference type="STRING" id="7227.FBpp0088773"/>
<dbReference type="PaxDb" id="7227-FBpp0088773"/>
<dbReference type="DNASU" id="3772218"/>
<dbReference type="EnsemblMetazoa" id="FBtr0091626">
    <property type="protein sequence ID" value="FBpp0088773"/>
    <property type="gene ID" value="FBgn0064115"/>
</dbReference>
<dbReference type="GeneID" id="3772218"/>
<dbReference type="KEGG" id="dme:Dmel_CG33649"/>
<dbReference type="UCSC" id="CG33649-RA">
    <property type="organism name" value="d. melanogaster"/>
</dbReference>
<dbReference type="AGR" id="FB:FBgn0064115"/>
<dbReference type="CTD" id="283459"/>
<dbReference type="FlyBase" id="FBgn0064115">
    <property type="gene designation" value="GatC"/>
</dbReference>
<dbReference type="VEuPathDB" id="VectorBase:FBgn0064115"/>
<dbReference type="eggNOG" id="KOG4247">
    <property type="taxonomic scope" value="Eukaryota"/>
</dbReference>
<dbReference type="GeneTree" id="ENSGT00390000018351"/>
<dbReference type="HOGENOM" id="CLU_105899_0_1_1"/>
<dbReference type="InParanoid" id="Q86BL4"/>
<dbReference type="OMA" id="RCAKRTD"/>
<dbReference type="OrthoDB" id="5394539at2759"/>
<dbReference type="PhylomeDB" id="Q86BL4"/>
<dbReference type="BioGRID-ORCS" id="3772218">
    <property type="hits" value="0 hits in 1 CRISPR screen"/>
</dbReference>
<dbReference type="GenomeRNAi" id="3772218"/>
<dbReference type="PRO" id="PR:Q86BL4"/>
<dbReference type="Proteomes" id="UP000000803">
    <property type="component" value="Chromosome 2L"/>
</dbReference>
<dbReference type="Bgee" id="FBgn0064115">
    <property type="expression patterns" value="Expressed in saliva-secreting gland and 11 other cell types or tissues"/>
</dbReference>
<dbReference type="GO" id="GO:0030956">
    <property type="term" value="C:glutamyl-tRNA(Gln) amidotransferase complex"/>
    <property type="evidence" value="ECO:0000250"/>
    <property type="project" value="FlyBase"/>
</dbReference>
<dbReference type="GO" id="GO:0005739">
    <property type="term" value="C:mitochondrion"/>
    <property type="evidence" value="ECO:0000250"/>
    <property type="project" value="FlyBase"/>
</dbReference>
<dbReference type="GO" id="GO:0005524">
    <property type="term" value="F:ATP binding"/>
    <property type="evidence" value="ECO:0007669"/>
    <property type="project" value="UniProtKB-KW"/>
</dbReference>
<dbReference type="GO" id="GO:0050567">
    <property type="term" value="F:glutaminyl-tRNA synthase (glutamine-hydrolyzing) activity"/>
    <property type="evidence" value="ECO:0007669"/>
    <property type="project" value="UniProtKB-UniRule"/>
</dbReference>
<dbReference type="GO" id="GO:0070681">
    <property type="term" value="P:glutaminyl-tRNAGln biosynthesis via transamidation"/>
    <property type="evidence" value="ECO:0000250"/>
    <property type="project" value="FlyBase"/>
</dbReference>
<dbReference type="GO" id="GO:0032543">
    <property type="term" value="P:mitochondrial translation"/>
    <property type="evidence" value="ECO:0000250"/>
    <property type="project" value="FlyBase"/>
</dbReference>
<dbReference type="GO" id="GO:0006450">
    <property type="term" value="P:regulation of translational fidelity"/>
    <property type="evidence" value="ECO:0007669"/>
    <property type="project" value="InterPro"/>
</dbReference>
<dbReference type="HAMAP" id="MF_00122">
    <property type="entry name" value="GatC"/>
    <property type="match status" value="1"/>
</dbReference>
<dbReference type="InterPro" id="IPR036113">
    <property type="entry name" value="Asp/Glu-ADT_sf_sub_c"/>
</dbReference>
<dbReference type="InterPro" id="IPR003837">
    <property type="entry name" value="GatC"/>
</dbReference>
<dbReference type="NCBIfam" id="TIGR00135">
    <property type="entry name" value="gatC"/>
    <property type="match status" value="1"/>
</dbReference>
<dbReference type="PANTHER" id="PTHR15004">
    <property type="entry name" value="GLUTAMYL-TRNA(GLN) AMIDOTRANSFERASE SUBUNIT C, MITOCHONDRIAL"/>
    <property type="match status" value="1"/>
</dbReference>
<dbReference type="PANTHER" id="PTHR15004:SF0">
    <property type="entry name" value="GLUTAMYL-TRNA(GLN) AMIDOTRANSFERASE SUBUNIT C, MITOCHONDRIAL"/>
    <property type="match status" value="1"/>
</dbReference>
<dbReference type="Pfam" id="PF02686">
    <property type="entry name" value="GatC"/>
    <property type="match status" value="1"/>
</dbReference>
<dbReference type="SUPFAM" id="SSF141000">
    <property type="entry name" value="Glu-tRNAGln amidotransferase C subunit"/>
    <property type="match status" value="1"/>
</dbReference>
<organism>
    <name type="scientific">Drosophila melanogaster</name>
    <name type="common">Fruit fly</name>
    <dbReference type="NCBI Taxonomy" id="7227"/>
    <lineage>
        <taxon>Eukaryota</taxon>
        <taxon>Metazoa</taxon>
        <taxon>Ecdysozoa</taxon>
        <taxon>Arthropoda</taxon>
        <taxon>Hexapoda</taxon>
        <taxon>Insecta</taxon>
        <taxon>Pterygota</taxon>
        <taxon>Neoptera</taxon>
        <taxon>Endopterygota</taxon>
        <taxon>Diptera</taxon>
        <taxon>Brachycera</taxon>
        <taxon>Muscomorpha</taxon>
        <taxon>Ephydroidea</taxon>
        <taxon>Drosophilidae</taxon>
        <taxon>Drosophila</taxon>
        <taxon>Sophophora</taxon>
    </lineage>
</organism>
<protein>
    <recommendedName>
        <fullName evidence="1">Glutamyl-tRNA(Gln) amidotransferase subunit C, mitochondrial</fullName>
        <shortName evidence="1">Glu-AdT subunit C</shortName>
        <ecNumber evidence="1">6.3.5.-</ecNumber>
    </recommendedName>
</protein>
<gene>
    <name evidence="2" type="primary">GatC</name>
    <name evidence="2" type="ORF">CG33649</name>
</gene>
<comment type="function">
    <text evidence="1">Allows the formation of correctly charged Gln-tRNA(Gln) through the transamidation of misacylated Glu-tRNA(Gln) in the mitochondria. The reaction takes place in the presence of glutamine and ATP through an activated gamma-phospho-Glu-tRNA(Gln).</text>
</comment>
<comment type="catalytic activity">
    <reaction evidence="1">
        <text>L-glutamyl-tRNA(Gln) + L-glutamine + ATP + H2O = L-glutaminyl-tRNA(Gln) + L-glutamate + ADP + phosphate + H(+)</text>
        <dbReference type="Rhea" id="RHEA:17521"/>
        <dbReference type="Rhea" id="RHEA-COMP:9681"/>
        <dbReference type="Rhea" id="RHEA-COMP:9684"/>
        <dbReference type="ChEBI" id="CHEBI:15377"/>
        <dbReference type="ChEBI" id="CHEBI:15378"/>
        <dbReference type="ChEBI" id="CHEBI:29985"/>
        <dbReference type="ChEBI" id="CHEBI:30616"/>
        <dbReference type="ChEBI" id="CHEBI:43474"/>
        <dbReference type="ChEBI" id="CHEBI:58359"/>
        <dbReference type="ChEBI" id="CHEBI:78520"/>
        <dbReference type="ChEBI" id="CHEBI:78521"/>
        <dbReference type="ChEBI" id="CHEBI:456216"/>
    </reaction>
</comment>
<comment type="subunit">
    <text evidence="1">Subunit of the heterotrimeric GatCAB amidotransferase (AdT) complex, composed of A, B and C subunits.</text>
</comment>
<comment type="subcellular location">
    <subcellularLocation>
        <location evidence="1">Mitochondrion</location>
    </subcellularLocation>
</comment>
<comment type="miscellaneous">
    <text evidence="1">This protein may be expected to contain an N-terminal transit peptide but none has been predicted.</text>
</comment>
<comment type="similarity">
    <text evidence="1">Belongs to the GatC family.</text>
</comment>
<evidence type="ECO:0000255" key="1">
    <source>
        <dbReference type="HAMAP-Rule" id="MF_03149"/>
    </source>
</evidence>
<evidence type="ECO:0000312" key="2">
    <source>
        <dbReference type="FlyBase" id="FBgn0064115"/>
    </source>
</evidence>
<keyword id="KW-0067">ATP-binding</keyword>
<keyword id="KW-0436">Ligase</keyword>
<keyword id="KW-0496">Mitochondrion</keyword>
<keyword id="KW-0547">Nucleotide-binding</keyword>
<keyword id="KW-0648">Protein biosynthesis</keyword>
<keyword id="KW-1185">Reference proteome</keyword>
<reference key="1">
    <citation type="journal article" date="2000" name="Science">
        <title>The genome sequence of Drosophila melanogaster.</title>
        <authorList>
            <person name="Adams M.D."/>
            <person name="Celniker S.E."/>
            <person name="Holt R.A."/>
            <person name="Evans C.A."/>
            <person name="Gocayne J.D."/>
            <person name="Amanatides P.G."/>
            <person name="Scherer S.E."/>
            <person name="Li P.W."/>
            <person name="Hoskins R.A."/>
            <person name="Galle R.F."/>
            <person name="George R.A."/>
            <person name="Lewis S.E."/>
            <person name="Richards S."/>
            <person name="Ashburner M."/>
            <person name="Henderson S.N."/>
            <person name="Sutton G.G."/>
            <person name="Wortman J.R."/>
            <person name="Yandell M.D."/>
            <person name="Zhang Q."/>
            <person name="Chen L.X."/>
            <person name="Brandon R.C."/>
            <person name="Rogers Y.-H.C."/>
            <person name="Blazej R.G."/>
            <person name="Champe M."/>
            <person name="Pfeiffer B.D."/>
            <person name="Wan K.H."/>
            <person name="Doyle C."/>
            <person name="Baxter E.G."/>
            <person name="Helt G."/>
            <person name="Nelson C.R."/>
            <person name="Miklos G.L.G."/>
            <person name="Abril J.F."/>
            <person name="Agbayani A."/>
            <person name="An H.-J."/>
            <person name="Andrews-Pfannkoch C."/>
            <person name="Baldwin D."/>
            <person name="Ballew R.M."/>
            <person name="Basu A."/>
            <person name="Baxendale J."/>
            <person name="Bayraktaroglu L."/>
            <person name="Beasley E.M."/>
            <person name="Beeson K.Y."/>
            <person name="Benos P.V."/>
            <person name="Berman B.P."/>
            <person name="Bhandari D."/>
            <person name="Bolshakov S."/>
            <person name="Borkova D."/>
            <person name="Botchan M.R."/>
            <person name="Bouck J."/>
            <person name="Brokstein P."/>
            <person name="Brottier P."/>
            <person name="Burtis K.C."/>
            <person name="Busam D.A."/>
            <person name="Butler H."/>
            <person name="Cadieu E."/>
            <person name="Center A."/>
            <person name="Chandra I."/>
            <person name="Cherry J.M."/>
            <person name="Cawley S."/>
            <person name="Dahlke C."/>
            <person name="Davenport L.B."/>
            <person name="Davies P."/>
            <person name="de Pablos B."/>
            <person name="Delcher A."/>
            <person name="Deng Z."/>
            <person name="Mays A.D."/>
            <person name="Dew I."/>
            <person name="Dietz S.M."/>
            <person name="Dodson K."/>
            <person name="Doup L.E."/>
            <person name="Downes M."/>
            <person name="Dugan-Rocha S."/>
            <person name="Dunkov B.C."/>
            <person name="Dunn P."/>
            <person name="Durbin K.J."/>
            <person name="Evangelista C.C."/>
            <person name="Ferraz C."/>
            <person name="Ferriera S."/>
            <person name="Fleischmann W."/>
            <person name="Fosler C."/>
            <person name="Gabrielian A.E."/>
            <person name="Garg N.S."/>
            <person name="Gelbart W.M."/>
            <person name="Glasser K."/>
            <person name="Glodek A."/>
            <person name="Gong F."/>
            <person name="Gorrell J.H."/>
            <person name="Gu Z."/>
            <person name="Guan P."/>
            <person name="Harris M."/>
            <person name="Harris N.L."/>
            <person name="Harvey D.A."/>
            <person name="Heiman T.J."/>
            <person name="Hernandez J.R."/>
            <person name="Houck J."/>
            <person name="Hostin D."/>
            <person name="Houston K.A."/>
            <person name="Howland T.J."/>
            <person name="Wei M.-H."/>
            <person name="Ibegwam C."/>
            <person name="Jalali M."/>
            <person name="Kalush F."/>
            <person name="Karpen G.H."/>
            <person name="Ke Z."/>
            <person name="Kennison J.A."/>
            <person name="Ketchum K.A."/>
            <person name="Kimmel B.E."/>
            <person name="Kodira C.D."/>
            <person name="Kraft C.L."/>
            <person name="Kravitz S."/>
            <person name="Kulp D."/>
            <person name="Lai Z."/>
            <person name="Lasko P."/>
            <person name="Lei Y."/>
            <person name="Levitsky A.A."/>
            <person name="Li J.H."/>
            <person name="Li Z."/>
            <person name="Liang Y."/>
            <person name="Lin X."/>
            <person name="Liu X."/>
            <person name="Mattei B."/>
            <person name="McIntosh T.C."/>
            <person name="McLeod M.P."/>
            <person name="McPherson D."/>
            <person name="Merkulov G."/>
            <person name="Milshina N.V."/>
            <person name="Mobarry C."/>
            <person name="Morris J."/>
            <person name="Moshrefi A."/>
            <person name="Mount S.M."/>
            <person name="Moy M."/>
            <person name="Murphy B."/>
            <person name="Murphy L."/>
            <person name="Muzny D.M."/>
            <person name="Nelson D.L."/>
            <person name="Nelson D.R."/>
            <person name="Nelson K.A."/>
            <person name="Nixon K."/>
            <person name="Nusskern D.R."/>
            <person name="Pacleb J.M."/>
            <person name="Palazzolo M."/>
            <person name="Pittman G.S."/>
            <person name="Pan S."/>
            <person name="Pollard J."/>
            <person name="Puri V."/>
            <person name="Reese M.G."/>
            <person name="Reinert K."/>
            <person name="Remington K."/>
            <person name="Saunders R.D.C."/>
            <person name="Scheeler F."/>
            <person name="Shen H."/>
            <person name="Shue B.C."/>
            <person name="Siden-Kiamos I."/>
            <person name="Simpson M."/>
            <person name="Skupski M.P."/>
            <person name="Smith T.J."/>
            <person name="Spier E."/>
            <person name="Spradling A.C."/>
            <person name="Stapleton M."/>
            <person name="Strong R."/>
            <person name="Sun E."/>
            <person name="Svirskas R."/>
            <person name="Tector C."/>
            <person name="Turner R."/>
            <person name="Venter E."/>
            <person name="Wang A.H."/>
            <person name="Wang X."/>
            <person name="Wang Z.-Y."/>
            <person name="Wassarman D.A."/>
            <person name="Weinstock G.M."/>
            <person name="Weissenbach J."/>
            <person name="Williams S.M."/>
            <person name="Woodage T."/>
            <person name="Worley K.C."/>
            <person name="Wu D."/>
            <person name="Yang S."/>
            <person name="Yao Q.A."/>
            <person name="Ye J."/>
            <person name="Yeh R.-F."/>
            <person name="Zaveri J.S."/>
            <person name="Zhan M."/>
            <person name="Zhang G."/>
            <person name="Zhao Q."/>
            <person name="Zheng L."/>
            <person name="Zheng X.H."/>
            <person name="Zhong F.N."/>
            <person name="Zhong W."/>
            <person name="Zhou X."/>
            <person name="Zhu S.C."/>
            <person name="Zhu X."/>
            <person name="Smith H.O."/>
            <person name="Gibbs R.A."/>
            <person name="Myers E.W."/>
            <person name="Rubin G.M."/>
            <person name="Venter J.C."/>
        </authorList>
    </citation>
    <scope>NUCLEOTIDE SEQUENCE [LARGE SCALE GENOMIC DNA]</scope>
    <source>
        <strain>Berkeley</strain>
    </source>
</reference>
<reference key="2">
    <citation type="journal article" date="2002" name="Genome Biol.">
        <title>Annotation of the Drosophila melanogaster euchromatic genome: a systematic review.</title>
        <authorList>
            <person name="Misra S."/>
            <person name="Crosby M.A."/>
            <person name="Mungall C.J."/>
            <person name="Matthews B.B."/>
            <person name="Campbell K.S."/>
            <person name="Hradecky P."/>
            <person name="Huang Y."/>
            <person name="Kaminker J.S."/>
            <person name="Millburn G.H."/>
            <person name="Prochnik S.E."/>
            <person name="Smith C.D."/>
            <person name="Tupy J.L."/>
            <person name="Whitfield E.J."/>
            <person name="Bayraktaroglu L."/>
            <person name="Berman B.P."/>
            <person name="Bettencourt B.R."/>
            <person name="Celniker S.E."/>
            <person name="de Grey A.D.N.J."/>
            <person name="Drysdale R.A."/>
            <person name="Harris N.L."/>
            <person name="Richter J."/>
            <person name="Russo S."/>
            <person name="Schroeder A.J."/>
            <person name="Shu S.Q."/>
            <person name="Stapleton M."/>
            <person name="Yamada C."/>
            <person name="Ashburner M."/>
            <person name="Gelbart W.M."/>
            <person name="Rubin G.M."/>
            <person name="Lewis S.E."/>
        </authorList>
    </citation>
    <scope>GENOME REANNOTATION</scope>
    <source>
        <strain>Berkeley</strain>
    </source>
</reference>
<accession>Q86BL4</accession>